<proteinExistence type="evidence at transcript level"/>
<dbReference type="EMBL" id="AY178864">
    <property type="protein sequence ID" value="AAP29398.2"/>
    <property type="molecule type" value="Genomic_DNA"/>
</dbReference>
<dbReference type="RefSeq" id="NP_848066.2">
    <property type="nucleotide sequence ID" value="NC_004766.1"/>
</dbReference>
<dbReference type="SMR" id="Q85FL4"/>
<dbReference type="GeneID" id="807341"/>
<dbReference type="GO" id="GO:0009535">
    <property type="term" value="C:chloroplast thylakoid membrane"/>
    <property type="evidence" value="ECO:0007669"/>
    <property type="project" value="UniProtKB-SubCell"/>
</dbReference>
<dbReference type="GO" id="GO:0045259">
    <property type="term" value="C:proton-transporting ATP synthase complex"/>
    <property type="evidence" value="ECO:0007669"/>
    <property type="project" value="UniProtKB-KW"/>
</dbReference>
<dbReference type="GO" id="GO:0005524">
    <property type="term" value="F:ATP binding"/>
    <property type="evidence" value="ECO:0007669"/>
    <property type="project" value="UniProtKB-UniRule"/>
</dbReference>
<dbReference type="GO" id="GO:0046933">
    <property type="term" value="F:proton-transporting ATP synthase activity, rotational mechanism"/>
    <property type="evidence" value="ECO:0007669"/>
    <property type="project" value="UniProtKB-UniRule"/>
</dbReference>
<dbReference type="CDD" id="cd12152">
    <property type="entry name" value="F1-ATPase_delta"/>
    <property type="match status" value="1"/>
</dbReference>
<dbReference type="FunFam" id="2.60.15.10:FF:000002">
    <property type="entry name" value="ATP synthase epsilon chain, chloroplastic"/>
    <property type="match status" value="1"/>
</dbReference>
<dbReference type="Gene3D" id="6.10.140.480">
    <property type="match status" value="1"/>
</dbReference>
<dbReference type="Gene3D" id="2.60.15.10">
    <property type="entry name" value="F0F1 ATP synthase delta/epsilon subunit, N-terminal"/>
    <property type="match status" value="1"/>
</dbReference>
<dbReference type="HAMAP" id="MF_00530">
    <property type="entry name" value="ATP_synth_epsil_bac"/>
    <property type="match status" value="1"/>
</dbReference>
<dbReference type="InterPro" id="IPR001469">
    <property type="entry name" value="ATP_synth_F1_dsu/esu"/>
</dbReference>
<dbReference type="InterPro" id="IPR020546">
    <property type="entry name" value="ATP_synth_F1_dsu/esu_N"/>
</dbReference>
<dbReference type="InterPro" id="IPR020547">
    <property type="entry name" value="ATP_synth_F1_esu_C"/>
</dbReference>
<dbReference type="InterPro" id="IPR036771">
    <property type="entry name" value="ATPsynth_dsu/esu_N"/>
</dbReference>
<dbReference type="NCBIfam" id="TIGR01216">
    <property type="entry name" value="ATP_synt_epsi"/>
    <property type="match status" value="1"/>
</dbReference>
<dbReference type="PANTHER" id="PTHR13822">
    <property type="entry name" value="ATP SYNTHASE DELTA/EPSILON CHAIN"/>
    <property type="match status" value="1"/>
</dbReference>
<dbReference type="PANTHER" id="PTHR13822:SF10">
    <property type="entry name" value="ATP SYNTHASE EPSILON CHAIN, CHLOROPLASTIC"/>
    <property type="match status" value="1"/>
</dbReference>
<dbReference type="Pfam" id="PF00401">
    <property type="entry name" value="ATP-synt_DE"/>
    <property type="match status" value="1"/>
</dbReference>
<dbReference type="Pfam" id="PF02823">
    <property type="entry name" value="ATP-synt_DE_N"/>
    <property type="match status" value="1"/>
</dbReference>
<dbReference type="SUPFAM" id="SSF51344">
    <property type="entry name" value="Epsilon subunit of F1F0-ATP synthase N-terminal domain"/>
    <property type="match status" value="1"/>
</dbReference>
<feature type="chain" id="PRO_0000188249" description="ATP synthase epsilon chain, chloroplastic">
    <location>
        <begin position="1"/>
        <end position="132"/>
    </location>
</feature>
<reference key="1">
    <citation type="journal article" date="2003" name="DNA Res.">
        <title>Complete nucleotide sequence of the chloroplast genome from a leptosporangiate fern, Adiantum capillus-veneris L.</title>
        <authorList>
            <person name="Wolf P.G."/>
            <person name="Rowe C.A."/>
            <person name="Sinclair R.B."/>
            <person name="Hasebe M."/>
        </authorList>
    </citation>
    <scope>NUCLEOTIDE SEQUENCE [LARGE SCALE GENOMIC DNA]</scope>
</reference>
<reference key="2">
    <citation type="journal article" date="2004" name="Gene">
        <title>High levels of RNA editing in a vascular plant chloroplast genome: analysis of transcripts from the fern Adiantum capillus-veneris.</title>
        <authorList>
            <person name="Wolf P.G."/>
            <person name="Rowe C.A."/>
            <person name="Hasebe M."/>
        </authorList>
    </citation>
    <scope>NUCLEOTIDE SEQUENCE [GENOMIC DNA]</scope>
    <scope>RNA EDITING</scope>
    <source>
        <tissue>Frond</tissue>
    </source>
</reference>
<name>ATPE_ADICA</name>
<geneLocation type="chloroplast"/>
<accession>Q85FL4</accession>
<protein>
    <recommendedName>
        <fullName evidence="1">ATP synthase epsilon chain, chloroplastic</fullName>
    </recommendedName>
    <alternativeName>
        <fullName evidence="1">ATP synthase F1 sector epsilon subunit</fullName>
    </alternativeName>
    <alternativeName>
        <fullName evidence="1">F-ATPase epsilon subunit</fullName>
    </alternativeName>
</protein>
<evidence type="ECO:0000255" key="1">
    <source>
        <dbReference type="HAMAP-Rule" id="MF_00530"/>
    </source>
</evidence>
<evidence type="ECO:0000269" key="2">
    <source>
    </source>
</evidence>
<keyword id="KW-0066">ATP synthesis</keyword>
<keyword id="KW-0139">CF(1)</keyword>
<keyword id="KW-0150">Chloroplast</keyword>
<keyword id="KW-0375">Hydrogen ion transport</keyword>
<keyword id="KW-0406">Ion transport</keyword>
<keyword id="KW-0472">Membrane</keyword>
<keyword id="KW-0934">Plastid</keyword>
<keyword id="KW-0691">RNA editing</keyword>
<keyword id="KW-0793">Thylakoid</keyword>
<keyword id="KW-0813">Transport</keyword>
<sequence length="132" mass="14559">MVLSLCVMAPNRIVWNSEVREIILSTNSGQIGILPNHAPLLAALDMGVLKIRSDKQWSAMALMGGFAMIDNNRVIILVNEAERASEIDPEEARKSFQTAQAELAEAEGRRKLIEANLTFKRAKARLEASTIV</sequence>
<organism>
    <name type="scientific">Adiantum capillus-veneris</name>
    <name type="common">Maidenhair fern</name>
    <dbReference type="NCBI Taxonomy" id="13818"/>
    <lineage>
        <taxon>Eukaryota</taxon>
        <taxon>Viridiplantae</taxon>
        <taxon>Streptophyta</taxon>
        <taxon>Embryophyta</taxon>
        <taxon>Tracheophyta</taxon>
        <taxon>Polypodiopsida</taxon>
        <taxon>Polypodiidae</taxon>
        <taxon>Polypodiales</taxon>
        <taxon>Pteridineae</taxon>
        <taxon>Pteridaceae</taxon>
        <taxon>Vittarioideae</taxon>
        <taxon>Adiantum</taxon>
    </lineage>
</organism>
<comment type="function">
    <text evidence="1">Produces ATP from ADP in the presence of a proton gradient across the membrane.</text>
</comment>
<comment type="subunit">
    <text>F-type ATPases have 2 components, CF(1) - the catalytic core - and CF(0) - the membrane proton channel. CF(1) has five subunits: alpha(3), beta(3), gamma(1), delta(1), epsilon(1). CF(0) has three main subunits: a, b and c.</text>
</comment>
<comment type="subcellular location">
    <subcellularLocation>
        <location evidence="1">Plastid</location>
        <location evidence="1">Chloroplast thylakoid membrane</location>
        <topology evidence="1">Peripheral membrane protein</topology>
    </subcellularLocation>
</comment>
<comment type="RNA editing">
    <location>
        <position position="3" evidence="2"/>
    </location>
    <location>
        <position position="20" evidence="2"/>
    </location>
    <location>
        <position position="62" evidence="2"/>
    </location>
</comment>
<comment type="similarity">
    <text evidence="1">Belongs to the ATPase epsilon chain family.</text>
</comment>
<gene>
    <name evidence="1" type="primary">atpE</name>
</gene>